<dbReference type="EMBL" id="CP000526">
    <property type="protein sequence ID" value="ABM50771.1"/>
    <property type="molecule type" value="Genomic_DNA"/>
</dbReference>
<dbReference type="RefSeq" id="WP_004202016.1">
    <property type="nucleotide sequence ID" value="NC_008785.1"/>
</dbReference>
<dbReference type="SMR" id="A1V5M3"/>
<dbReference type="GeneID" id="93060843"/>
<dbReference type="KEGG" id="bmv:BMASAVP1_A2214"/>
<dbReference type="HOGENOM" id="CLU_068529_2_1_4"/>
<dbReference type="GO" id="GO:1990230">
    <property type="term" value="C:iron-sulfur cluster transfer complex"/>
    <property type="evidence" value="ECO:0007669"/>
    <property type="project" value="TreeGrafter"/>
</dbReference>
<dbReference type="GO" id="GO:0001671">
    <property type="term" value="F:ATPase activator activity"/>
    <property type="evidence" value="ECO:0007669"/>
    <property type="project" value="InterPro"/>
</dbReference>
<dbReference type="GO" id="GO:0051087">
    <property type="term" value="F:protein-folding chaperone binding"/>
    <property type="evidence" value="ECO:0007669"/>
    <property type="project" value="InterPro"/>
</dbReference>
<dbReference type="GO" id="GO:0044571">
    <property type="term" value="P:[2Fe-2S] cluster assembly"/>
    <property type="evidence" value="ECO:0007669"/>
    <property type="project" value="InterPro"/>
</dbReference>
<dbReference type="GO" id="GO:0051259">
    <property type="term" value="P:protein complex oligomerization"/>
    <property type="evidence" value="ECO:0007669"/>
    <property type="project" value="InterPro"/>
</dbReference>
<dbReference type="GO" id="GO:0006457">
    <property type="term" value="P:protein folding"/>
    <property type="evidence" value="ECO:0007669"/>
    <property type="project" value="UniProtKB-UniRule"/>
</dbReference>
<dbReference type="CDD" id="cd06257">
    <property type="entry name" value="DnaJ"/>
    <property type="match status" value="1"/>
</dbReference>
<dbReference type="Gene3D" id="1.10.287.110">
    <property type="entry name" value="DnaJ domain"/>
    <property type="match status" value="1"/>
</dbReference>
<dbReference type="Gene3D" id="1.20.1280.20">
    <property type="entry name" value="HscB, C-terminal domain"/>
    <property type="match status" value="1"/>
</dbReference>
<dbReference type="HAMAP" id="MF_00682">
    <property type="entry name" value="HscB"/>
    <property type="match status" value="1"/>
</dbReference>
<dbReference type="InterPro" id="IPR001623">
    <property type="entry name" value="DnaJ_domain"/>
</dbReference>
<dbReference type="InterPro" id="IPR004640">
    <property type="entry name" value="HscB"/>
</dbReference>
<dbReference type="InterPro" id="IPR036386">
    <property type="entry name" value="HscB_C_sf"/>
</dbReference>
<dbReference type="InterPro" id="IPR009073">
    <property type="entry name" value="HscB_oligo_C"/>
</dbReference>
<dbReference type="InterPro" id="IPR036869">
    <property type="entry name" value="J_dom_sf"/>
</dbReference>
<dbReference type="NCBIfam" id="TIGR00714">
    <property type="entry name" value="hscB"/>
    <property type="match status" value="1"/>
</dbReference>
<dbReference type="NCBIfam" id="NF002935">
    <property type="entry name" value="PRK03578.1"/>
    <property type="match status" value="1"/>
</dbReference>
<dbReference type="PANTHER" id="PTHR14021">
    <property type="entry name" value="IRON-SULFUR CLUSTER CO-CHAPERONE PROTEIN HSCB"/>
    <property type="match status" value="1"/>
</dbReference>
<dbReference type="PANTHER" id="PTHR14021:SF15">
    <property type="entry name" value="IRON-SULFUR CLUSTER CO-CHAPERONE PROTEIN HSCB"/>
    <property type="match status" value="1"/>
</dbReference>
<dbReference type="Pfam" id="PF07743">
    <property type="entry name" value="HSCB_C"/>
    <property type="match status" value="1"/>
</dbReference>
<dbReference type="SMART" id="SM00271">
    <property type="entry name" value="DnaJ"/>
    <property type="match status" value="1"/>
</dbReference>
<dbReference type="SUPFAM" id="SSF46565">
    <property type="entry name" value="Chaperone J-domain"/>
    <property type="match status" value="1"/>
</dbReference>
<dbReference type="SUPFAM" id="SSF47144">
    <property type="entry name" value="HSC20 (HSCB), C-terminal oligomerisation domain"/>
    <property type="match status" value="1"/>
</dbReference>
<dbReference type="PROSITE" id="PS50076">
    <property type="entry name" value="DNAJ_2"/>
    <property type="match status" value="1"/>
</dbReference>
<feature type="chain" id="PRO_1000082997" description="Co-chaperone protein HscB homolog">
    <location>
        <begin position="1"/>
        <end position="175"/>
    </location>
</feature>
<feature type="domain" description="J" evidence="1">
    <location>
        <begin position="7"/>
        <end position="79"/>
    </location>
</feature>
<evidence type="ECO:0000255" key="1">
    <source>
        <dbReference type="HAMAP-Rule" id="MF_00682"/>
    </source>
</evidence>
<reference key="1">
    <citation type="journal article" date="2010" name="Genome Biol. Evol.">
        <title>Continuing evolution of Burkholderia mallei through genome reduction and large-scale rearrangements.</title>
        <authorList>
            <person name="Losada L."/>
            <person name="Ronning C.M."/>
            <person name="DeShazer D."/>
            <person name="Woods D."/>
            <person name="Fedorova N."/>
            <person name="Kim H.S."/>
            <person name="Shabalina S.A."/>
            <person name="Pearson T.R."/>
            <person name="Brinkac L."/>
            <person name="Tan P."/>
            <person name="Nandi T."/>
            <person name="Crabtree J."/>
            <person name="Badger J."/>
            <person name="Beckstrom-Sternberg S."/>
            <person name="Saqib M."/>
            <person name="Schutzer S.E."/>
            <person name="Keim P."/>
            <person name="Nierman W.C."/>
        </authorList>
    </citation>
    <scope>NUCLEOTIDE SEQUENCE [LARGE SCALE GENOMIC DNA]</scope>
    <source>
        <strain>SAVP1</strain>
    </source>
</reference>
<keyword id="KW-0143">Chaperone</keyword>
<name>HSCB_BURMS</name>
<organism>
    <name type="scientific">Burkholderia mallei (strain SAVP1)</name>
    <dbReference type="NCBI Taxonomy" id="320388"/>
    <lineage>
        <taxon>Bacteria</taxon>
        <taxon>Pseudomonadati</taxon>
        <taxon>Pseudomonadota</taxon>
        <taxon>Betaproteobacteria</taxon>
        <taxon>Burkholderiales</taxon>
        <taxon>Burkholderiaceae</taxon>
        <taxon>Burkholderia</taxon>
        <taxon>pseudomallei group</taxon>
    </lineage>
</organism>
<accession>A1V5M3</accession>
<gene>
    <name evidence="1" type="primary">hscB</name>
    <name type="ordered locus">BMASAVP1_A2214</name>
</gene>
<comment type="function">
    <text evidence="1">Co-chaperone involved in the maturation of iron-sulfur cluster-containing proteins. Seems to help targeting proteins to be folded toward HscA.</text>
</comment>
<comment type="subunit">
    <text evidence="1">Interacts with HscA and stimulates its ATPase activity.</text>
</comment>
<comment type="similarity">
    <text evidence="1">Belongs to the HscB family.</text>
</comment>
<protein>
    <recommendedName>
        <fullName evidence="1">Co-chaperone protein HscB homolog</fullName>
    </recommendedName>
</protein>
<sequence length="175" mass="19583">MVSLKDSHFDLFHLPARFALDEPTLDAAYRAVQSQVHPDRFAAAGDAQKRIAMQWATRANEAYQTLRDPLKRATYLLHLRGVDVGAENNTAMEPAFLMQQMEWRERIEDAAGAKNVDALDALLAELRDERRARLAKLGALLDSGSDQGAAEAVRQLMFVERVSAEIGAQIERLEH</sequence>
<proteinExistence type="inferred from homology"/>